<proteinExistence type="inferred from homology"/>
<accession>Q6MH12</accession>
<comment type="function">
    <text evidence="1">ATP-dependent specificity component of the Clp protease. It directs the protease to specific substrates. Can perform chaperone functions in the absence of ClpP.</text>
</comment>
<comment type="subunit">
    <text evidence="1">Component of the ClpX-ClpP complex. Forms a hexameric ring that, in the presence of ATP, binds to fourteen ClpP subunits assembled into a disk-like structure with a central cavity, resembling the structure of eukaryotic proteasomes.</text>
</comment>
<comment type="similarity">
    <text evidence="1">Belongs to the ClpX chaperone family.</text>
</comment>
<name>CLPX_BDEBA</name>
<protein>
    <recommendedName>
        <fullName evidence="1">ATP-dependent Clp protease ATP-binding subunit ClpX</fullName>
    </recommendedName>
</protein>
<organism>
    <name type="scientific">Bdellovibrio bacteriovorus (strain ATCC 15356 / DSM 50701 / NCIMB 9529 / HD100)</name>
    <dbReference type="NCBI Taxonomy" id="264462"/>
    <lineage>
        <taxon>Bacteria</taxon>
        <taxon>Pseudomonadati</taxon>
        <taxon>Bdellovibrionota</taxon>
        <taxon>Bdellovibrionia</taxon>
        <taxon>Bdellovibrionales</taxon>
        <taxon>Pseudobdellovibrionaceae</taxon>
        <taxon>Bdellovibrio</taxon>
    </lineage>
</organism>
<evidence type="ECO:0000255" key="1">
    <source>
        <dbReference type="HAMAP-Rule" id="MF_00175"/>
    </source>
</evidence>
<evidence type="ECO:0000255" key="2">
    <source>
        <dbReference type="PROSITE-ProRule" id="PRU01250"/>
    </source>
</evidence>
<sequence>MTTKDTNGALRCSFCGKGQKEVKKLIAGPGVYICDECIDLCNDIIDEEKERETAVKGTFKVPKPSDIKTYLDDYVIGQTQAKKTLAVAVHNHYKRVNAMSGGKKSADVEMQKSNILLIGPTGSGKTLLAQTIAKVLNVPFAMADATTLTEAGYVGEDVENVVLNLLQASDYDVEKAQKGVIYVDEIDKISRKSENPSITRDVSGEGVQQALLKILEGTVANLPPKGGRKHPQQEFIQVDTTNILFIVGGAFVGLDKIIEQRTTNKTMGIAADIRTSEEVEKSANLLSKVEPDDLSKFGLIPEFIGRLPAIAVLAPLDEEALLDILVRPKNAITKQYQKLFSFEGVELKFTEKALRAVAQMALKRKTGARGLRGVLETAMLDVMYDIPSKNNVKEVVIDENVINEGAQPMLVYKTDEEIRAEEEEAKKKSSA</sequence>
<dbReference type="EMBL" id="BX842656">
    <property type="protein sequence ID" value="CAE81115.1"/>
    <property type="molecule type" value="Genomic_DNA"/>
</dbReference>
<dbReference type="RefSeq" id="WP_011166058.1">
    <property type="nucleotide sequence ID" value="NC_005363.1"/>
</dbReference>
<dbReference type="SMR" id="Q6MH12"/>
<dbReference type="STRING" id="264462.Bd3753"/>
<dbReference type="GeneID" id="93014531"/>
<dbReference type="KEGG" id="bba:Bd3753"/>
<dbReference type="eggNOG" id="COG1219">
    <property type="taxonomic scope" value="Bacteria"/>
</dbReference>
<dbReference type="HOGENOM" id="CLU_014218_8_2_7"/>
<dbReference type="Proteomes" id="UP000008080">
    <property type="component" value="Chromosome"/>
</dbReference>
<dbReference type="GO" id="GO:0009376">
    <property type="term" value="C:HslUV protease complex"/>
    <property type="evidence" value="ECO:0007669"/>
    <property type="project" value="TreeGrafter"/>
</dbReference>
<dbReference type="GO" id="GO:0005524">
    <property type="term" value="F:ATP binding"/>
    <property type="evidence" value="ECO:0007669"/>
    <property type="project" value="UniProtKB-UniRule"/>
</dbReference>
<dbReference type="GO" id="GO:0016887">
    <property type="term" value="F:ATP hydrolysis activity"/>
    <property type="evidence" value="ECO:0007669"/>
    <property type="project" value="InterPro"/>
</dbReference>
<dbReference type="GO" id="GO:0140662">
    <property type="term" value="F:ATP-dependent protein folding chaperone"/>
    <property type="evidence" value="ECO:0007669"/>
    <property type="project" value="InterPro"/>
</dbReference>
<dbReference type="GO" id="GO:0046983">
    <property type="term" value="F:protein dimerization activity"/>
    <property type="evidence" value="ECO:0007669"/>
    <property type="project" value="InterPro"/>
</dbReference>
<dbReference type="GO" id="GO:0051082">
    <property type="term" value="F:unfolded protein binding"/>
    <property type="evidence" value="ECO:0007669"/>
    <property type="project" value="UniProtKB-UniRule"/>
</dbReference>
<dbReference type="GO" id="GO:0008270">
    <property type="term" value="F:zinc ion binding"/>
    <property type="evidence" value="ECO:0007669"/>
    <property type="project" value="InterPro"/>
</dbReference>
<dbReference type="GO" id="GO:0051301">
    <property type="term" value="P:cell division"/>
    <property type="evidence" value="ECO:0007669"/>
    <property type="project" value="TreeGrafter"/>
</dbReference>
<dbReference type="GO" id="GO:0051603">
    <property type="term" value="P:proteolysis involved in protein catabolic process"/>
    <property type="evidence" value="ECO:0007669"/>
    <property type="project" value="TreeGrafter"/>
</dbReference>
<dbReference type="CDD" id="cd19497">
    <property type="entry name" value="RecA-like_ClpX"/>
    <property type="match status" value="1"/>
</dbReference>
<dbReference type="FunFam" id="1.10.8.60:FF:000002">
    <property type="entry name" value="ATP-dependent Clp protease ATP-binding subunit ClpX"/>
    <property type="match status" value="1"/>
</dbReference>
<dbReference type="FunFam" id="3.40.50.300:FF:000005">
    <property type="entry name" value="ATP-dependent Clp protease ATP-binding subunit ClpX"/>
    <property type="match status" value="1"/>
</dbReference>
<dbReference type="Gene3D" id="1.10.8.60">
    <property type="match status" value="1"/>
</dbReference>
<dbReference type="Gene3D" id="6.20.220.10">
    <property type="entry name" value="ClpX chaperone, C4-type zinc finger domain"/>
    <property type="match status" value="1"/>
</dbReference>
<dbReference type="Gene3D" id="3.40.50.300">
    <property type="entry name" value="P-loop containing nucleotide triphosphate hydrolases"/>
    <property type="match status" value="1"/>
</dbReference>
<dbReference type="HAMAP" id="MF_00175">
    <property type="entry name" value="ClpX"/>
    <property type="match status" value="1"/>
</dbReference>
<dbReference type="InterPro" id="IPR003593">
    <property type="entry name" value="AAA+_ATPase"/>
</dbReference>
<dbReference type="InterPro" id="IPR050052">
    <property type="entry name" value="ATP-dep_Clp_protease_ClpX"/>
</dbReference>
<dbReference type="InterPro" id="IPR003959">
    <property type="entry name" value="ATPase_AAA_core"/>
</dbReference>
<dbReference type="InterPro" id="IPR019489">
    <property type="entry name" value="Clp_ATPase_C"/>
</dbReference>
<dbReference type="InterPro" id="IPR004487">
    <property type="entry name" value="Clp_protease_ATP-bd_su_ClpX"/>
</dbReference>
<dbReference type="InterPro" id="IPR046425">
    <property type="entry name" value="ClpX_bact"/>
</dbReference>
<dbReference type="InterPro" id="IPR027417">
    <property type="entry name" value="P-loop_NTPase"/>
</dbReference>
<dbReference type="InterPro" id="IPR010603">
    <property type="entry name" value="Znf_CppX_C4"/>
</dbReference>
<dbReference type="InterPro" id="IPR038366">
    <property type="entry name" value="Znf_CppX_C4_sf"/>
</dbReference>
<dbReference type="NCBIfam" id="TIGR00382">
    <property type="entry name" value="clpX"/>
    <property type="match status" value="1"/>
</dbReference>
<dbReference type="NCBIfam" id="NF003745">
    <property type="entry name" value="PRK05342.1"/>
    <property type="match status" value="1"/>
</dbReference>
<dbReference type="PANTHER" id="PTHR48102:SF7">
    <property type="entry name" value="ATP-DEPENDENT CLP PROTEASE ATP-BINDING SUBUNIT CLPX-LIKE, MITOCHONDRIAL"/>
    <property type="match status" value="1"/>
</dbReference>
<dbReference type="PANTHER" id="PTHR48102">
    <property type="entry name" value="ATP-DEPENDENT CLP PROTEASE ATP-BINDING SUBUNIT CLPX-LIKE, MITOCHONDRIAL-RELATED"/>
    <property type="match status" value="1"/>
</dbReference>
<dbReference type="Pfam" id="PF07724">
    <property type="entry name" value="AAA_2"/>
    <property type="match status" value="1"/>
</dbReference>
<dbReference type="Pfam" id="PF10431">
    <property type="entry name" value="ClpB_D2-small"/>
    <property type="match status" value="1"/>
</dbReference>
<dbReference type="Pfam" id="PF06689">
    <property type="entry name" value="zf-C4_ClpX"/>
    <property type="match status" value="1"/>
</dbReference>
<dbReference type="SMART" id="SM00382">
    <property type="entry name" value="AAA"/>
    <property type="match status" value="1"/>
</dbReference>
<dbReference type="SMART" id="SM01086">
    <property type="entry name" value="ClpB_D2-small"/>
    <property type="match status" value="1"/>
</dbReference>
<dbReference type="SMART" id="SM00994">
    <property type="entry name" value="zf-C4_ClpX"/>
    <property type="match status" value="1"/>
</dbReference>
<dbReference type="SUPFAM" id="SSF57716">
    <property type="entry name" value="Glucocorticoid receptor-like (DNA-binding domain)"/>
    <property type="match status" value="1"/>
</dbReference>
<dbReference type="SUPFAM" id="SSF52540">
    <property type="entry name" value="P-loop containing nucleoside triphosphate hydrolases"/>
    <property type="match status" value="1"/>
</dbReference>
<dbReference type="PROSITE" id="PS51902">
    <property type="entry name" value="CLPX_ZB"/>
    <property type="match status" value="1"/>
</dbReference>
<feature type="chain" id="PRO_0000160317" description="ATP-dependent Clp protease ATP-binding subunit ClpX">
    <location>
        <begin position="1"/>
        <end position="431"/>
    </location>
</feature>
<feature type="domain" description="ClpX-type ZB" evidence="2">
    <location>
        <begin position="1"/>
        <end position="53"/>
    </location>
</feature>
<feature type="binding site" evidence="2">
    <location>
        <position position="12"/>
    </location>
    <ligand>
        <name>Zn(2+)</name>
        <dbReference type="ChEBI" id="CHEBI:29105"/>
    </ligand>
</feature>
<feature type="binding site" evidence="2">
    <location>
        <position position="15"/>
    </location>
    <ligand>
        <name>Zn(2+)</name>
        <dbReference type="ChEBI" id="CHEBI:29105"/>
    </ligand>
</feature>
<feature type="binding site" evidence="2">
    <location>
        <position position="34"/>
    </location>
    <ligand>
        <name>Zn(2+)</name>
        <dbReference type="ChEBI" id="CHEBI:29105"/>
    </ligand>
</feature>
<feature type="binding site" evidence="2">
    <location>
        <position position="37"/>
    </location>
    <ligand>
        <name>Zn(2+)</name>
        <dbReference type="ChEBI" id="CHEBI:29105"/>
    </ligand>
</feature>
<feature type="binding site" evidence="1">
    <location>
        <begin position="120"/>
        <end position="127"/>
    </location>
    <ligand>
        <name>ATP</name>
        <dbReference type="ChEBI" id="CHEBI:30616"/>
    </ligand>
</feature>
<gene>
    <name evidence="1" type="primary">clpX</name>
    <name type="ordered locus">Bd3753</name>
</gene>
<reference key="1">
    <citation type="journal article" date="2004" name="Science">
        <title>A predator unmasked: life cycle of Bdellovibrio bacteriovorus from a genomic perspective.</title>
        <authorList>
            <person name="Rendulic S."/>
            <person name="Jagtap P."/>
            <person name="Rosinus A."/>
            <person name="Eppinger M."/>
            <person name="Baar C."/>
            <person name="Lanz C."/>
            <person name="Keller H."/>
            <person name="Lambert C."/>
            <person name="Evans K.J."/>
            <person name="Goesmann A."/>
            <person name="Meyer F."/>
            <person name="Sockett R.E."/>
            <person name="Schuster S.C."/>
        </authorList>
    </citation>
    <scope>NUCLEOTIDE SEQUENCE [LARGE SCALE GENOMIC DNA]</scope>
    <source>
        <strain>ATCC 15356 / DSM 50701 / NCIMB 9529 / HD100</strain>
    </source>
</reference>
<keyword id="KW-0067">ATP-binding</keyword>
<keyword id="KW-0143">Chaperone</keyword>
<keyword id="KW-0479">Metal-binding</keyword>
<keyword id="KW-0547">Nucleotide-binding</keyword>
<keyword id="KW-1185">Reference proteome</keyword>
<keyword id="KW-0862">Zinc</keyword>